<reference key="1">
    <citation type="journal article" date="2007" name="J. Bacteriol.">
        <title>The genome sequence of avian pathogenic Escherichia coli strain O1:K1:H7 shares strong similarities with human extraintestinal pathogenic E. coli genomes.</title>
        <authorList>
            <person name="Johnson T.J."/>
            <person name="Kariyawasam S."/>
            <person name="Wannemuehler Y."/>
            <person name="Mangiamele P."/>
            <person name="Johnson S.J."/>
            <person name="Doetkott C."/>
            <person name="Skyberg J.A."/>
            <person name="Lynne A.M."/>
            <person name="Johnson J.R."/>
            <person name="Nolan L.K."/>
        </authorList>
    </citation>
    <scope>NUCLEOTIDE SEQUENCE [LARGE SCALE GENOMIC DNA]</scope>
</reference>
<dbReference type="EMBL" id="CP000468">
    <property type="protein sequence ID" value="ABJ03716.1"/>
    <property type="molecule type" value="Genomic_DNA"/>
</dbReference>
<dbReference type="RefSeq" id="WP_001298688.1">
    <property type="nucleotide sequence ID" value="NZ_CADILS010000035.1"/>
</dbReference>
<dbReference type="SMR" id="A1AJ76"/>
<dbReference type="KEGG" id="ecv:APECO1_2221"/>
<dbReference type="HOGENOM" id="CLU_004131_5_1_6"/>
<dbReference type="Proteomes" id="UP000008216">
    <property type="component" value="Chromosome"/>
</dbReference>
<dbReference type="GO" id="GO:0032300">
    <property type="term" value="C:mismatch repair complex"/>
    <property type="evidence" value="ECO:0007669"/>
    <property type="project" value="InterPro"/>
</dbReference>
<dbReference type="GO" id="GO:0005524">
    <property type="term" value="F:ATP binding"/>
    <property type="evidence" value="ECO:0007669"/>
    <property type="project" value="InterPro"/>
</dbReference>
<dbReference type="GO" id="GO:0016887">
    <property type="term" value="F:ATP hydrolysis activity"/>
    <property type="evidence" value="ECO:0007669"/>
    <property type="project" value="InterPro"/>
</dbReference>
<dbReference type="GO" id="GO:0140664">
    <property type="term" value="F:ATP-dependent DNA damage sensor activity"/>
    <property type="evidence" value="ECO:0007669"/>
    <property type="project" value="InterPro"/>
</dbReference>
<dbReference type="GO" id="GO:0030983">
    <property type="term" value="F:mismatched DNA binding"/>
    <property type="evidence" value="ECO:0007669"/>
    <property type="project" value="InterPro"/>
</dbReference>
<dbReference type="GO" id="GO:0006298">
    <property type="term" value="P:mismatch repair"/>
    <property type="evidence" value="ECO:0007669"/>
    <property type="project" value="UniProtKB-UniRule"/>
</dbReference>
<dbReference type="CDD" id="cd16926">
    <property type="entry name" value="HATPase_MutL-MLH-PMS-like"/>
    <property type="match status" value="1"/>
</dbReference>
<dbReference type="CDD" id="cd03482">
    <property type="entry name" value="MutL_Trans_MutL"/>
    <property type="match status" value="1"/>
</dbReference>
<dbReference type="FunFam" id="3.30.230.10:FF:000013">
    <property type="entry name" value="DNA mismatch repair endonuclease MutL"/>
    <property type="match status" value="1"/>
</dbReference>
<dbReference type="FunFam" id="3.30.565.10:FF:000003">
    <property type="entry name" value="DNA mismatch repair endonuclease MutL"/>
    <property type="match status" value="1"/>
</dbReference>
<dbReference type="FunFam" id="3.30.1370.100:FF:000002">
    <property type="entry name" value="DNA mismatch repair protein MutL"/>
    <property type="match status" value="1"/>
</dbReference>
<dbReference type="Gene3D" id="3.30.230.10">
    <property type="match status" value="1"/>
</dbReference>
<dbReference type="Gene3D" id="3.30.565.10">
    <property type="entry name" value="Histidine kinase-like ATPase, C-terminal domain"/>
    <property type="match status" value="1"/>
</dbReference>
<dbReference type="Gene3D" id="3.30.1540.20">
    <property type="entry name" value="MutL, C-terminal domain, dimerisation subdomain"/>
    <property type="match status" value="1"/>
</dbReference>
<dbReference type="Gene3D" id="3.30.1370.100">
    <property type="entry name" value="MutL, C-terminal domain, regulatory subdomain"/>
    <property type="match status" value="1"/>
</dbReference>
<dbReference type="HAMAP" id="MF_00149">
    <property type="entry name" value="DNA_mis_repair"/>
    <property type="match status" value="1"/>
</dbReference>
<dbReference type="InterPro" id="IPR014762">
    <property type="entry name" value="DNA_mismatch_repair_CS"/>
</dbReference>
<dbReference type="InterPro" id="IPR020667">
    <property type="entry name" value="DNA_mismatch_repair_MutL"/>
</dbReference>
<dbReference type="InterPro" id="IPR013507">
    <property type="entry name" value="DNA_mismatch_S5_2-like"/>
</dbReference>
<dbReference type="InterPro" id="IPR036890">
    <property type="entry name" value="HATPase_C_sf"/>
</dbReference>
<dbReference type="InterPro" id="IPR002099">
    <property type="entry name" value="MutL/Mlh/PMS"/>
</dbReference>
<dbReference type="InterPro" id="IPR038973">
    <property type="entry name" value="MutL/Mlh/Pms-like"/>
</dbReference>
<dbReference type="InterPro" id="IPR014790">
    <property type="entry name" value="MutL_C"/>
</dbReference>
<dbReference type="InterPro" id="IPR042120">
    <property type="entry name" value="MutL_C_dimsub"/>
</dbReference>
<dbReference type="InterPro" id="IPR042121">
    <property type="entry name" value="MutL_C_regsub"/>
</dbReference>
<dbReference type="InterPro" id="IPR037198">
    <property type="entry name" value="MutL_C_sf"/>
</dbReference>
<dbReference type="InterPro" id="IPR020568">
    <property type="entry name" value="Ribosomal_Su5_D2-typ_SF"/>
</dbReference>
<dbReference type="InterPro" id="IPR014721">
    <property type="entry name" value="Ribsml_uS5_D2-typ_fold_subgr"/>
</dbReference>
<dbReference type="NCBIfam" id="TIGR00585">
    <property type="entry name" value="mutl"/>
    <property type="match status" value="1"/>
</dbReference>
<dbReference type="NCBIfam" id="NF000948">
    <property type="entry name" value="PRK00095.1-1"/>
    <property type="match status" value="1"/>
</dbReference>
<dbReference type="PANTHER" id="PTHR10073">
    <property type="entry name" value="DNA MISMATCH REPAIR PROTEIN MLH, PMS, MUTL"/>
    <property type="match status" value="1"/>
</dbReference>
<dbReference type="PANTHER" id="PTHR10073:SF12">
    <property type="entry name" value="DNA MISMATCH REPAIR PROTEIN MLH1"/>
    <property type="match status" value="1"/>
</dbReference>
<dbReference type="Pfam" id="PF01119">
    <property type="entry name" value="DNA_mis_repair"/>
    <property type="match status" value="1"/>
</dbReference>
<dbReference type="Pfam" id="PF13589">
    <property type="entry name" value="HATPase_c_3"/>
    <property type="match status" value="1"/>
</dbReference>
<dbReference type="Pfam" id="PF08676">
    <property type="entry name" value="MutL_C"/>
    <property type="match status" value="1"/>
</dbReference>
<dbReference type="SMART" id="SM01340">
    <property type="entry name" value="DNA_mis_repair"/>
    <property type="match status" value="1"/>
</dbReference>
<dbReference type="SMART" id="SM00853">
    <property type="entry name" value="MutL_C"/>
    <property type="match status" value="1"/>
</dbReference>
<dbReference type="SUPFAM" id="SSF55874">
    <property type="entry name" value="ATPase domain of HSP90 chaperone/DNA topoisomerase II/histidine kinase"/>
    <property type="match status" value="1"/>
</dbReference>
<dbReference type="SUPFAM" id="SSF118116">
    <property type="entry name" value="DNA mismatch repair protein MutL"/>
    <property type="match status" value="1"/>
</dbReference>
<dbReference type="SUPFAM" id="SSF54211">
    <property type="entry name" value="Ribosomal protein S5 domain 2-like"/>
    <property type="match status" value="1"/>
</dbReference>
<dbReference type="PROSITE" id="PS00058">
    <property type="entry name" value="DNA_MISMATCH_REPAIR_1"/>
    <property type="match status" value="1"/>
</dbReference>
<feature type="chain" id="PRO_1000010012" description="DNA mismatch repair protein MutL">
    <location>
        <begin position="1"/>
        <end position="615"/>
    </location>
</feature>
<feature type="region of interest" description="Disordered" evidence="2">
    <location>
        <begin position="362"/>
        <end position="397"/>
    </location>
</feature>
<feature type="compositionally biased region" description="Low complexity" evidence="2">
    <location>
        <begin position="373"/>
        <end position="391"/>
    </location>
</feature>
<protein>
    <recommendedName>
        <fullName evidence="1">DNA mismatch repair protein MutL</fullName>
    </recommendedName>
</protein>
<sequence>MPIQVLPPQLANQIAAGEVVERPASVVKELVENSLDAGATRIDIDIERGGAKLIRIRDNGCGIKKDELALALARHATSKIASLDDLEAIISLGFRGEALASISSVSRLTLTSRTAEQQEAWQAYAEGRDMDVTVKPAAHPVGTTLEVLDLFYNTPARRKFLRTEKTEFNHIDEIIRRIALARFDVTISLSHNGKIVRQYRAVPEGGQKERRLGAICGTAFLEQALAIEWQHGDLTLRGWVADPNHTTPALAEIQYCYVNGRMMRDRLINHAIRQACEDKLGADQQPAFVLYLEIDPHQVDVNVHPAKHEVRFHQSRLVHDFIYQGVLSVLQQQLETPLPLDDEPQPAPRAIPENRVAAGRNHFAEPAVREPVAPRYSPAPASGSRPAASWPNAQPGYQKQQGEVYRQLLQTPAPMQKPKAPEPQEPALAANSQSFGRVLTIVHSDCALLERDGNISLLSLPVAERWLRQAQLTPGEVPVCAQPLLIPLRLKVSGEEKSALEKAQSALAELGIDFQSDAQHVTIRAVPLPLRQQNLQILIPELIGYLAKQSVFEPGNIAQWIARNLMSEHAQWSMAQAITLLADVERLCPQLVKTPPGGLLQSVDLHPAIKALKDE</sequence>
<name>MUTL_ECOK1</name>
<evidence type="ECO:0000255" key="1">
    <source>
        <dbReference type="HAMAP-Rule" id="MF_00149"/>
    </source>
</evidence>
<evidence type="ECO:0000256" key="2">
    <source>
        <dbReference type="SAM" id="MobiDB-lite"/>
    </source>
</evidence>
<proteinExistence type="inferred from homology"/>
<gene>
    <name evidence="1" type="primary">mutL</name>
    <name type="ordered locus">Ecok1_42220</name>
    <name type="ORF">APECO1_2221</name>
</gene>
<keyword id="KW-0227">DNA damage</keyword>
<keyword id="KW-0234">DNA repair</keyword>
<keyword id="KW-1185">Reference proteome</keyword>
<comment type="function">
    <text evidence="1">This protein is involved in the repair of mismatches in DNA. It is required for dam-dependent methyl-directed DNA mismatch repair. May act as a 'molecular matchmaker', a protein that promotes the formation of a stable complex between two or more DNA-binding proteins in an ATP-dependent manner without itself being part of a final effector complex.</text>
</comment>
<comment type="similarity">
    <text evidence="1">Belongs to the DNA mismatch repair MutL/HexB family.</text>
</comment>
<organism>
    <name type="scientific">Escherichia coli O1:K1 / APEC</name>
    <dbReference type="NCBI Taxonomy" id="405955"/>
    <lineage>
        <taxon>Bacteria</taxon>
        <taxon>Pseudomonadati</taxon>
        <taxon>Pseudomonadota</taxon>
        <taxon>Gammaproteobacteria</taxon>
        <taxon>Enterobacterales</taxon>
        <taxon>Enterobacteriaceae</taxon>
        <taxon>Escherichia</taxon>
    </lineage>
</organism>
<accession>A1AJ76</accession>